<feature type="chain" id="PRO_1000120820" description="Small ribosomal subunit protein bS6">
    <location>
        <begin position="1"/>
        <end position="160"/>
    </location>
</feature>
<comment type="function">
    <text evidence="1">Binds together with bS18 to 16S ribosomal RNA.</text>
</comment>
<comment type="similarity">
    <text evidence="1">Belongs to the bacterial ribosomal protein bS6 family.</text>
</comment>
<reference key="1">
    <citation type="submission" date="2008-10" db="EMBL/GenBank/DDBJ databases">
        <title>Genome sequence of Ureaplasma urealyticum serovar 10 ATCC-33699.</title>
        <authorList>
            <person name="Shrivastava S."/>
            <person name="Methe B.A."/>
            <person name="Glass J."/>
            <person name="White K."/>
            <person name="Duffy L.B."/>
        </authorList>
    </citation>
    <scope>NUCLEOTIDE SEQUENCE [LARGE SCALE GENOMIC DNA]</scope>
    <source>
        <strain>ATCC 33699 / Western</strain>
    </source>
</reference>
<proteinExistence type="inferred from homology"/>
<dbReference type="EMBL" id="CP001184">
    <property type="protein sequence ID" value="ACI59829.1"/>
    <property type="molecule type" value="Genomic_DNA"/>
</dbReference>
<dbReference type="RefSeq" id="WP_004025588.1">
    <property type="nucleotide sequence ID" value="NC_011374.1"/>
</dbReference>
<dbReference type="SMR" id="B5ZC61"/>
<dbReference type="STRING" id="565575.UUR10_0645"/>
<dbReference type="GeneID" id="93849101"/>
<dbReference type="KEGG" id="uue:UUR10_0645"/>
<dbReference type="eggNOG" id="COG0360">
    <property type="taxonomic scope" value="Bacteria"/>
</dbReference>
<dbReference type="HOGENOM" id="CLU_139827_0_0_14"/>
<dbReference type="OrthoDB" id="397558at2"/>
<dbReference type="Proteomes" id="UP000002018">
    <property type="component" value="Chromosome"/>
</dbReference>
<dbReference type="GO" id="GO:1990904">
    <property type="term" value="C:ribonucleoprotein complex"/>
    <property type="evidence" value="ECO:0007669"/>
    <property type="project" value="UniProtKB-KW"/>
</dbReference>
<dbReference type="GO" id="GO:0005840">
    <property type="term" value="C:ribosome"/>
    <property type="evidence" value="ECO:0007669"/>
    <property type="project" value="UniProtKB-KW"/>
</dbReference>
<dbReference type="GO" id="GO:0019843">
    <property type="term" value="F:rRNA binding"/>
    <property type="evidence" value="ECO:0007669"/>
    <property type="project" value="UniProtKB-UniRule"/>
</dbReference>
<dbReference type="GO" id="GO:0003735">
    <property type="term" value="F:structural constituent of ribosome"/>
    <property type="evidence" value="ECO:0007669"/>
    <property type="project" value="InterPro"/>
</dbReference>
<dbReference type="GO" id="GO:0006412">
    <property type="term" value="P:translation"/>
    <property type="evidence" value="ECO:0007669"/>
    <property type="project" value="UniProtKB-UniRule"/>
</dbReference>
<dbReference type="CDD" id="cd00473">
    <property type="entry name" value="bS6"/>
    <property type="match status" value="1"/>
</dbReference>
<dbReference type="Gene3D" id="3.30.70.60">
    <property type="match status" value="1"/>
</dbReference>
<dbReference type="HAMAP" id="MF_00360">
    <property type="entry name" value="Ribosomal_bS6"/>
    <property type="match status" value="1"/>
</dbReference>
<dbReference type="InterPro" id="IPR000529">
    <property type="entry name" value="Ribosomal_bS6"/>
</dbReference>
<dbReference type="InterPro" id="IPR035980">
    <property type="entry name" value="Ribosomal_bS6_sf"/>
</dbReference>
<dbReference type="InterPro" id="IPR020814">
    <property type="entry name" value="Ribosomal_S6_plastid/chlpt"/>
</dbReference>
<dbReference type="InterPro" id="IPR014717">
    <property type="entry name" value="Transl_elong_EF1B/ribsomal_bS6"/>
</dbReference>
<dbReference type="NCBIfam" id="TIGR00166">
    <property type="entry name" value="S6"/>
    <property type="match status" value="1"/>
</dbReference>
<dbReference type="Pfam" id="PF01250">
    <property type="entry name" value="Ribosomal_S6"/>
    <property type="match status" value="1"/>
</dbReference>
<dbReference type="SUPFAM" id="SSF54995">
    <property type="entry name" value="Ribosomal protein S6"/>
    <property type="match status" value="1"/>
</dbReference>
<sequence>MAKYEIMLVVRGDLDQEQANKVANELKATLKNTEVKENNYEGVQQLAYEINKLKTAYRYVYNFETTDVSLINEFRRLAIINKNVLRHIIINLEKDYGYKATVNAKKVQRNEKRAEVYVRQKEEAERRAAERQAAYEAMKAEREAAGLPVKEFVKGANSKR</sequence>
<organism>
    <name type="scientific">Ureaplasma urealyticum serovar 10 (strain ATCC 33699 / Western)</name>
    <dbReference type="NCBI Taxonomy" id="565575"/>
    <lineage>
        <taxon>Bacteria</taxon>
        <taxon>Bacillati</taxon>
        <taxon>Mycoplasmatota</taxon>
        <taxon>Mycoplasmoidales</taxon>
        <taxon>Mycoplasmoidaceae</taxon>
        <taxon>Ureaplasma</taxon>
    </lineage>
</organism>
<accession>B5ZC61</accession>
<protein>
    <recommendedName>
        <fullName evidence="1">Small ribosomal subunit protein bS6</fullName>
    </recommendedName>
    <alternativeName>
        <fullName evidence="2">30S ribosomal protein S6</fullName>
    </alternativeName>
</protein>
<evidence type="ECO:0000255" key="1">
    <source>
        <dbReference type="HAMAP-Rule" id="MF_00360"/>
    </source>
</evidence>
<evidence type="ECO:0000305" key="2"/>
<keyword id="KW-0687">Ribonucleoprotein</keyword>
<keyword id="KW-0689">Ribosomal protein</keyword>
<keyword id="KW-0694">RNA-binding</keyword>
<keyword id="KW-0699">rRNA-binding</keyword>
<name>RS6_UREU1</name>
<gene>
    <name evidence="1" type="primary">rpsF</name>
    <name type="ordered locus">UUR10_0645</name>
</gene>